<accession>Q9M401</accession>
<accession>Q8LAT6</accession>
<accession>Q9M2Z0</accession>
<gene>
    <name evidence="6" type="primary">BCAT3</name>
    <name evidence="9" type="ordered locus">At3g49680</name>
    <name evidence="5" type="ORF">T16K5.30</name>
</gene>
<keyword id="KW-0025">Alternative splicing</keyword>
<keyword id="KW-0028">Amino-acid biosynthesis</keyword>
<keyword id="KW-0032">Aminotransferase</keyword>
<keyword id="KW-0100">Branched-chain amino acid biosynthesis</keyword>
<keyword id="KW-0150">Chloroplast</keyword>
<keyword id="KW-0934">Plastid</keyword>
<keyword id="KW-0663">Pyridoxal phosphate</keyword>
<keyword id="KW-1185">Reference proteome</keyword>
<keyword id="KW-0808">Transferase</keyword>
<keyword id="KW-0809">Transit peptide</keyword>
<name>BCAT3_ARATH</name>
<sequence length="413" mass="44972">MERAAILPSVNQNYLLCPSRAFSTRLHSSTRNLSPPSFASIKLQHSSSSVSSNGGISLTRCNAVSSNSSSTLVTELADIDWDTVGFGLKPADYMYVMKCNIDGEFSKGELQRFGNIEISPSAGVLNYGQGLFEGLKAYRKKDGNNILLFRPEENAKRMRNGAERMCMPAPTVEQFVEAVTETVLANKRWVPPPGKGSLYVRPLLMGTGAVLGLAPAPEYTFIIYVSPVGNYFKEGVAPINLIVENEFHRATPGGTGGVKTIGNYAAVLKAQSIAKAKGYSDVLYLDCIYKRYLEEVSSCNIFIVKDNVISTPEIKGTILPGITRKSMIDVARTQGFQVEERNVTVDELLEADEVFCTGTAVVVSPVGSVTYKGKRVSYGEGTFGTVSKQLYTVLTSLQMGLIEDNMKWTVNLS</sequence>
<evidence type="ECO:0000250" key="1"/>
<evidence type="ECO:0000255" key="2"/>
<evidence type="ECO:0000269" key="3">
    <source>
    </source>
</evidence>
<evidence type="ECO:0000269" key="4">
    <source>
    </source>
</evidence>
<evidence type="ECO:0000303" key="5">
    <source>
    </source>
</evidence>
<evidence type="ECO:0000303" key="6">
    <source>
    </source>
</evidence>
<evidence type="ECO:0000303" key="7">
    <source>
    </source>
</evidence>
<evidence type="ECO:0000305" key="8"/>
<evidence type="ECO:0000312" key="9">
    <source>
        <dbReference type="Araport" id="AT3G49680"/>
    </source>
</evidence>
<comment type="function">
    <text evidence="3">Converts 2-oxo acids to branched-chain amino acids. Acts on leucine, isoleucine and valine. Also involved in methionine chain elongation cycle of aliphatic glucosinolate formation. Catalyzes the conversion of 5-methylthiopentyl-2-oxo and 6-methylthiohexyl-2-oxo acids to their respective Met derivatives, homomethionine and dihomo-methionine, respectively.</text>
</comment>
<comment type="catalytic activity">
    <reaction evidence="3">
        <text>L-leucine + 2-oxoglutarate = 4-methyl-2-oxopentanoate + L-glutamate</text>
        <dbReference type="Rhea" id="RHEA:18321"/>
        <dbReference type="ChEBI" id="CHEBI:16810"/>
        <dbReference type="ChEBI" id="CHEBI:17865"/>
        <dbReference type="ChEBI" id="CHEBI:29985"/>
        <dbReference type="ChEBI" id="CHEBI:57427"/>
        <dbReference type="EC" id="2.6.1.42"/>
    </reaction>
</comment>
<comment type="catalytic activity">
    <reaction evidence="3">
        <text>L-isoleucine + 2-oxoglutarate = (S)-3-methyl-2-oxopentanoate + L-glutamate</text>
        <dbReference type="Rhea" id="RHEA:24801"/>
        <dbReference type="ChEBI" id="CHEBI:16810"/>
        <dbReference type="ChEBI" id="CHEBI:29985"/>
        <dbReference type="ChEBI" id="CHEBI:35146"/>
        <dbReference type="ChEBI" id="CHEBI:58045"/>
        <dbReference type="EC" id="2.6.1.42"/>
    </reaction>
</comment>
<comment type="catalytic activity">
    <reaction evidence="3">
        <text>L-valine + 2-oxoglutarate = 3-methyl-2-oxobutanoate + L-glutamate</text>
        <dbReference type="Rhea" id="RHEA:24813"/>
        <dbReference type="ChEBI" id="CHEBI:11851"/>
        <dbReference type="ChEBI" id="CHEBI:16810"/>
        <dbReference type="ChEBI" id="CHEBI:29985"/>
        <dbReference type="ChEBI" id="CHEBI:57762"/>
        <dbReference type="EC" id="2.6.1.42"/>
    </reaction>
</comment>
<comment type="catalytic activity">
    <reaction evidence="3">
        <text>a 2-oxocarboxylate + L-methionine = 4-methylsulfanyl-2-oxobutanoate + an L-alpha-amino acid</text>
        <dbReference type="Rhea" id="RHEA:31763"/>
        <dbReference type="ChEBI" id="CHEBI:16723"/>
        <dbReference type="ChEBI" id="CHEBI:35179"/>
        <dbReference type="ChEBI" id="CHEBI:57844"/>
        <dbReference type="ChEBI" id="CHEBI:59869"/>
        <dbReference type="EC" id="2.6.1.88"/>
    </reaction>
</comment>
<comment type="cofactor">
    <cofactor>
        <name>pyridoxal 5'-phosphate</name>
        <dbReference type="ChEBI" id="CHEBI:597326"/>
    </cofactor>
</comment>
<comment type="activity regulation">
    <text evidence="4">Inhibited by Ser- or Thr-derived imine.</text>
</comment>
<comment type="biophysicochemical properties">
    <kinetics>
        <KM evidence="3">0.14 mM for 4-methyl-2-oxopentanoate (4MOP)</KM>
        <KM evidence="3">0.14 mM for (S)-3-methyl-2-oxopentanoate (3MOP)</KM>
        <KM evidence="3">1.38 mM for 3-methyl-2-oxobutanoate (3MOB)</KM>
        <KM evidence="3">1.92 mM for 2-oxo-4-methylthiobutanoate (MTOB)</KM>
        <Vmax evidence="3">27.42 umol/min/mg enzyme with 4-methyl-2-oxopentanoate as substrate</Vmax>
        <Vmax evidence="3">13.33 umol/min/mg enzyme with (S)-3-methyl-2-oxopentanoate as substrate</Vmax>
        <Vmax evidence="3">14.79 umol/min/mg enzyme with 3-methyl-2-oxobutanoate as substrate</Vmax>
        <Vmax evidence="3">21.01 umol/min/mg enzyme with 2-oxo-4-methylthiobutanoate as substrate</Vmax>
    </kinetics>
</comment>
<comment type="pathway">
    <text>Amino-acid biosynthesis; L-isoleucine biosynthesis; L-isoleucine from 2-oxobutanoate: step 4/4.</text>
</comment>
<comment type="pathway">
    <text>Amino-acid biosynthesis; L-leucine biosynthesis; L-leucine from 3-methyl-2-oxobutanoate: step 4/4.</text>
</comment>
<comment type="pathway">
    <text>Amino-acid biosynthesis; L-valine biosynthesis; L-valine from pyruvate: step 4/4.</text>
</comment>
<comment type="subcellular location">
    <subcellularLocation>
        <location evidence="4">Plastid</location>
        <location evidence="4">Chloroplast</location>
    </subcellularLocation>
</comment>
<comment type="alternative products">
    <event type="alternative splicing"/>
    <isoform>
        <id>Q9M401-1</id>
        <name>1</name>
        <sequence type="displayed"/>
    </isoform>
    <text>A number of isoforms are produced. According to EST sequences.</text>
</comment>
<comment type="tissue specificity">
    <text evidence="3">Expressed in the phloem cells.</text>
</comment>
<comment type="induction">
    <text evidence="7">Diurnally expressed.</text>
</comment>
<comment type="disruption phenotype">
    <text evidence="3">No effect on the levels of free amino acids in seeds, but reduced levels of Val, Ser and Thr in leaves. Increased levels of Met-derived glucosinolates in leaves.</text>
</comment>
<comment type="miscellaneous">
    <text>Branched-chain amino acids are synthesized in chloroplasts, whereas the degradation takes place in mitochondria.</text>
</comment>
<comment type="similarity">
    <text evidence="8">Belongs to the class-IV pyridoxal-phosphate-dependent aminotransferase family.</text>
</comment>
<comment type="sequence caution" evidence="8">
    <conflict type="erroneous gene model prediction">
        <sequence resource="EMBL-CDS" id="CAB66906"/>
    </conflict>
</comment>
<protein>
    <recommendedName>
        <fullName evidence="6">Branched-chain-amino-acid aminotransferase 3, chloroplastic</fullName>
        <shortName>Atbcat-3</shortName>
        <ecNumber>2.6.1.42</ecNumber>
        <ecNumber>2.6.1.88</ecNumber>
    </recommendedName>
</protein>
<reference key="1">
    <citation type="journal article" date="2002" name="Plant Physiol.">
        <title>The branched-chain amino acid transaminase gene family in Arabidopsis encodes plastid and mitochondrial proteins.</title>
        <authorList>
            <person name="Diebold R."/>
            <person name="Schuster J."/>
            <person name="Daschner K."/>
            <person name="Binder S."/>
        </authorList>
    </citation>
    <scope>NUCLEOTIDE SEQUENCE [MRNA]</scope>
    <scope>CHARACTERIZATION</scope>
    <source>
        <strain>cv. Columbia</strain>
    </source>
</reference>
<reference key="2">
    <citation type="journal article" date="2000" name="Nature">
        <title>Sequence and analysis of chromosome 3 of the plant Arabidopsis thaliana.</title>
        <authorList>
            <person name="Salanoubat M."/>
            <person name="Lemcke K."/>
            <person name="Rieger M."/>
            <person name="Ansorge W."/>
            <person name="Unseld M."/>
            <person name="Fartmann B."/>
            <person name="Valle G."/>
            <person name="Bloecker H."/>
            <person name="Perez-Alonso M."/>
            <person name="Obermaier B."/>
            <person name="Delseny M."/>
            <person name="Boutry M."/>
            <person name="Grivell L.A."/>
            <person name="Mache R."/>
            <person name="Puigdomenech P."/>
            <person name="De Simone V."/>
            <person name="Choisne N."/>
            <person name="Artiguenave F."/>
            <person name="Robert C."/>
            <person name="Brottier P."/>
            <person name="Wincker P."/>
            <person name="Cattolico L."/>
            <person name="Weissenbach J."/>
            <person name="Saurin W."/>
            <person name="Quetier F."/>
            <person name="Schaefer M."/>
            <person name="Mueller-Auer S."/>
            <person name="Gabel C."/>
            <person name="Fuchs M."/>
            <person name="Benes V."/>
            <person name="Wurmbach E."/>
            <person name="Drzonek H."/>
            <person name="Erfle H."/>
            <person name="Jordan N."/>
            <person name="Bangert S."/>
            <person name="Wiedelmann R."/>
            <person name="Kranz H."/>
            <person name="Voss H."/>
            <person name="Holland R."/>
            <person name="Brandt P."/>
            <person name="Nyakatura G."/>
            <person name="Vezzi A."/>
            <person name="D'Angelo M."/>
            <person name="Pallavicini A."/>
            <person name="Toppo S."/>
            <person name="Simionati B."/>
            <person name="Conrad A."/>
            <person name="Hornischer K."/>
            <person name="Kauer G."/>
            <person name="Loehnert T.-H."/>
            <person name="Nordsiek G."/>
            <person name="Reichelt J."/>
            <person name="Scharfe M."/>
            <person name="Schoen O."/>
            <person name="Bargues M."/>
            <person name="Terol J."/>
            <person name="Climent J."/>
            <person name="Navarro P."/>
            <person name="Collado C."/>
            <person name="Perez-Perez A."/>
            <person name="Ottenwaelder B."/>
            <person name="Duchemin D."/>
            <person name="Cooke R."/>
            <person name="Laudie M."/>
            <person name="Berger-Llauro C."/>
            <person name="Purnelle B."/>
            <person name="Masuy D."/>
            <person name="de Haan M."/>
            <person name="Maarse A.C."/>
            <person name="Alcaraz J.-P."/>
            <person name="Cottet A."/>
            <person name="Casacuberta E."/>
            <person name="Monfort A."/>
            <person name="Argiriou A."/>
            <person name="Flores M."/>
            <person name="Liguori R."/>
            <person name="Vitale D."/>
            <person name="Mannhaupt G."/>
            <person name="Haase D."/>
            <person name="Schoof H."/>
            <person name="Rudd S."/>
            <person name="Zaccaria P."/>
            <person name="Mewes H.-W."/>
            <person name="Mayer K.F.X."/>
            <person name="Kaul S."/>
            <person name="Town C.D."/>
            <person name="Koo H.L."/>
            <person name="Tallon L.J."/>
            <person name="Jenkins J."/>
            <person name="Rooney T."/>
            <person name="Rizzo M."/>
            <person name="Walts A."/>
            <person name="Utterback T."/>
            <person name="Fujii C.Y."/>
            <person name="Shea T.P."/>
            <person name="Creasy T.H."/>
            <person name="Haas B."/>
            <person name="Maiti R."/>
            <person name="Wu D."/>
            <person name="Peterson J."/>
            <person name="Van Aken S."/>
            <person name="Pai G."/>
            <person name="Militscher J."/>
            <person name="Sellers P."/>
            <person name="Gill J.E."/>
            <person name="Feldblyum T.V."/>
            <person name="Preuss D."/>
            <person name="Lin X."/>
            <person name="Nierman W.C."/>
            <person name="Salzberg S.L."/>
            <person name="White O."/>
            <person name="Venter J.C."/>
            <person name="Fraser C.M."/>
            <person name="Kaneko T."/>
            <person name="Nakamura Y."/>
            <person name="Sato S."/>
            <person name="Kato T."/>
            <person name="Asamizu E."/>
            <person name="Sasamoto S."/>
            <person name="Kimura T."/>
            <person name="Idesawa K."/>
            <person name="Kawashima K."/>
            <person name="Kishida Y."/>
            <person name="Kiyokawa C."/>
            <person name="Kohara M."/>
            <person name="Matsumoto M."/>
            <person name="Matsuno A."/>
            <person name="Muraki A."/>
            <person name="Nakayama S."/>
            <person name="Nakazaki N."/>
            <person name="Shinpo S."/>
            <person name="Takeuchi C."/>
            <person name="Wada T."/>
            <person name="Watanabe A."/>
            <person name="Yamada M."/>
            <person name="Yasuda M."/>
            <person name="Tabata S."/>
        </authorList>
    </citation>
    <scope>NUCLEOTIDE SEQUENCE [LARGE SCALE GENOMIC DNA]</scope>
    <source>
        <strain>cv. Columbia</strain>
    </source>
</reference>
<reference key="3">
    <citation type="journal article" date="2017" name="Plant J.">
        <title>Araport11: a complete reannotation of the Arabidopsis thaliana reference genome.</title>
        <authorList>
            <person name="Cheng C.Y."/>
            <person name="Krishnakumar V."/>
            <person name="Chan A.P."/>
            <person name="Thibaud-Nissen F."/>
            <person name="Schobel S."/>
            <person name="Town C.D."/>
        </authorList>
    </citation>
    <scope>GENOME REANNOTATION</scope>
    <source>
        <strain>cv. Columbia</strain>
    </source>
</reference>
<reference key="4">
    <citation type="journal article" date="2003" name="Science">
        <title>Empirical analysis of transcriptional activity in the Arabidopsis genome.</title>
        <authorList>
            <person name="Yamada K."/>
            <person name="Lim J."/>
            <person name="Dale J.M."/>
            <person name="Chen H."/>
            <person name="Shinn P."/>
            <person name="Palm C.J."/>
            <person name="Southwick A.M."/>
            <person name="Wu H.C."/>
            <person name="Kim C.J."/>
            <person name="Nguyen M."/>
            <person name="Pham P.K."/>
            <person name="Cheuk R.F."/>
            <person name="Karlin-Newmann G."/>
            <person name="Liu S.X."/>
            <person name="Lam B."/>
            <person name="Sakano H."/>
            <person name="Wu T."/>
            <person name="Yu G."/>
            <person name="Miranda M."/>
            <person name="Quach H.L."/>
            <person name="Tripp M."/>
            <person name="Chang C.H."/>
            <person name="Lee J.M."/>
            <person name="Toriumi M.J."/>
            <person name="Chan M.M."/>
            <person name="Tang C.C."/>
            <person name="Onodera C.S."/>
            <person name="Deng J.M."/>
            <person name="Akiyama K."/>
            <person name="Ansari Y."/>
            <person name="Arakawa T."/>
            <person name="Banh J."/>
            <person name="Banno F."/>
            <person name="Bowser L."/>
            <person name="Brooks S.Y."/>
            <person name="Carninci P."/>
            <person name="Chao Q."/>
            <person name="Choy N."/>
            <person name="Enju A."/>
            <person name="Goldsmith A.D."/>
            <person name="Gurjal M."/>
            <person name="Hansen N.F."/>
            <person name="Hayashizaki Y."/>
            <person name="Johnson-Hopson C."/>
            <person name="Hsuan V.W."/>
            <person name="Iida K."/>
            <person name="Karnes M."/>
            <person name="Khan S."/>
            <person name="Koesema E."/>
            <person name="Ishida J."/>
            <person name="Jiang P.X."/>
            <person name="Jones T."/>
            <person name="Kawai J."/>
            <person name="Kamiya A."/>
            <person name="Meyers C."/>
            <person name="Nakajima M."/>
            <person name="Narusaka M."/>
            <person name="Seki M."/>
            <person name="Sakurai T."/>
            <person name="Satou M."/>
            <person name="Tamse R."/>
            <person name="Vaysberg M."/>
            <person name="Wallender E.K."/>
            <person name="Wong C."/>
            <person name="Yamamura Y."/>
            <person name="Yuan S."/>
            <person name="Shinozaki K."/>
            <person name="Davis R.W."/>
            <person name="Theologis A."/>
            <person name="Ecker J.R."/>
        </authorList>
    </citation>
    <scope>NUCLEOTIDE SEQUENCE [LARGE SCALE MRNA]</scope>
    <source>
        <strain>cv. Columbia</strain>
    </source>
</reference>
<reference key="5">
    <citation type="submission" date="2002-03" db="EMBL/GenBank/DDBJ databases">
        <title>Full-length cDNA from Arabidopsis thaliana.</title>
        <authorList>
            <person name="Brover V.V."/>
            <person name="Troukhan M.E."/>
            <person name="Alexandrov N.A."/>
            <person name="Lu Y.-P."/>
            <person name="Flavell R.B."/>
            <person name="Feldmann K.A."/>
        </authorList>
    </citation>
    <scope>NUCLEOTIDE SEQUENCE [LARGE SCALE MRNA]</scope>
</reference>
<reference key="6">
    <citation type="journal article" date="2008" name="Plant Physiol.">
        <title>Arabidopsis branched-chain aminotransferase 3 functions in both amino acid and glucosinolate biosynthesis.</title>
        <authorList>
            <person name="Knill T."/>
            <person name="Schuster J."/>
            <person name="Reichelt M."/>
            <person name="Gershenzon J."/>
            <person name="Binder S."/>
        </authorList>
    </citation>
    <scope>FUNCTION</scope>
    <scope>CATALYTIC ACTIVITY</scope>
    <scope>BIOPHYSICOCHEMICAL PROPERTIES</scope>
    <scope>TISSUE SPECIFICITY</scope>
    <scope>INDUCTION</scope>
    <scope>DISRUPTION PHENOTYPE</scope>
</reference>
<reference key="7">
    <citation type="journal article" date="2014" name="Plant Cell">
        <title>Arabidopsis and Maize RidA proteins preempt reactive enamine/imine damage to branched-chain amino acid biosynthesis in plastids.</title>
        <authorList>
            <person name="Niehaus T.D."/>
            <person name="Nguyen T.N."/>
            <person name="Gidda S.K."/>
            <person name="ElBadawi-Sidhu M."/>
            <person name="Lambrecht J.A."/>
            <person name="McCarty D.R."/>
            <person name="Downs D.M."/>
            <person name="Cooper A.J."/>
            <person name="Fiehn O."/>
            <person name="Mullen R.T."/>
            <person name="Hanson A.D."/>
        </authorList>
    </citation>
    <scope>SUBCELLULAR LOCATION</scope>
    <scope>ACTIVITY REGULATION</scope>
</reference>
<proteinExistence type="evidence at protein level"/>
<feature type="transit peptide" description="Chloroplast" evidence="2">
    <location>
        <begin position="1"/>
        <end position="60"/>
    </location>
</feature>
<feature type="chain" id="PRO_0000001277" description="Branched-chain-amino-acid aminotransferase 3, chloroplastic">
    <location>
        <begin position="61"/>
        <end position="413"/>
    </location>
</feature>
<feature type="modified residue" description="N6-(pyridoxal phosphate)lysine" evidence="1">
    <location>
        <position position="259"/>
    </location>
</feature>
<feature type="sequence conflict" description="In Ref. 5; AAM65160." evidence="8" ref="5">
    <original>T</original>
    <variation>P</variation>
    <location>
        <position position="74"/>
    </location>
</feature>
<dbReference type="EC" id="2.6.1.42"/>
<dbReference type="EC" id="2.6.1.88"/>
<dbReference type="EMBL" id="AJ276124">
    <property type="protein sequence ID" value="CAB93131.1"/>
    <property type="molecule type" value="mRNA"/>
</dbReference>
<dbReference type="EMBL" id="AL132965">
    <property type="protein sequence ID" value="CAB66906.1"/>
    <property type="status" value="ALT_SEQ"/>
    <property type="molecule type" value="Genomic_DNA"/>
</dbReference>
<dbReference type="EMBL" id="CP002686">
    <property type="protein sequence ID" value="AEE78575.1"/>
    <property type="molecule type" value="Genomic_DNA"/>
</dbReference>
<dbReference type="EMBL" id="AF446355">
    <property type="protein sequence ID" value="AAL48229.1"/>
    <property type="molecule type" value="mRNA"/>
</dbReference>
<dbReference type="EMBL" id="AY097417">
    <property type="protein sequence ID" value="AAM19933.1"/>
    <property type="molecule type" value="mRNA"/>
</dbReference>
<dbReference type="EMBL" id="AY087619">
    <property type="protein sequence ID" value="AAM65160.1"/>
    <property type="molecule type" value="mRNA"/>
</dbReference>
<dbReference type="PIR" id="T46034">
    <property type="entry name" value="T46034"/>
</dbReference>
<dbReference type="RefSeq" id="NP_566923.1">
    <molecule id="Q9M401-1"/>
    <property type="nucleotide sequence ID" value="NM_114828.6"/>
</dbReference>
<dbReference type="SMR" id="Q9M401"/>
<dbReference type="BioGRID" id="9448">
    <property type="interactions" value="2"/>
</dbReference>
<dbReference type="FunCoup" id="Q9M401">
    <property type="interactions" value="2110"/>
</dbReference>
<dbReference type="STRING" id="3702.Q9M401"/>
<dbReference type="GlyGen" id="Q9M401">
    <property type="glycosylation" value="1 site"/>
</dbReference>
<dbReference type="iPTMnet" id="Q9M401"/>
<dbReference type="PaxDb" id="3702-AT3G49680.1"/>
<dbReference type="ProteomicsDB" id="241207">
    <molecule id="Q9M401-1"/>
</dbReference>
<dbReference type="EnsemblPlants" id="AT3G49680.1">
    <molecule id="Q9M401-1"/>
    <property type="protein sequence ID" value="AT3G49680.1"/>
    <property type="gene ID" value="AT3G49680"/>
</dbReference>
<dbReference type="GeneID" id="824130"/>
<dbReference type="Gramene" id="AT3G49680.1">
    <molecule id="Q9M401-1"/>
    <property type="protein sequence ID" value="AT3G49680.1"/>
    <property type="gene ID" value="AT3G49680"/>
</dbReference>
<dbReference type="KEGG" id="ath:AT3G49680"/>
<dbReference type="Araport" id="AT3G49680"/>
<dbReference type="TAIR" id="AT3G49680">
    <property type="gene designation" value="BCAT3"/>
</dbReference>
<dbReference type="eggNOG" id="KOG0975">
    <property type="taxonomic scope" value="Eukaryota"/>
</dbReference>
<dbReference type="InParanoid" id="Q9M401"/>
<dbReference type="PhylomeDB" id="Q9M401"/>
<dbReference type="BioCyc" id="ARA:AT3G49680-MONOMER"/>
<dbReference type="BioCyc" id="MetaCyc:AT3G49680-MONOMER"/>
<dbReference type="BRENDA" id="2.6.1.42">
    <property type="organism ID" value="399"/>
</dbReference>
<dbReference type="SABIO-RK" id="Q9M401"/>
<dbReference type="UniPathway" id="UPA00047">
    <property type="reaction ID" value="UER00058"/>
</dbReference>
<dbReference type="UniPathway" id="UPA00048">
    <property type="reaction ID" value="UER00073"/>
</dbReference>
<dbReference type="UniPathway" id="UPA00049">
    <property type="reaction ID" value="UER00062"/>
</dbReference>
<dbReference type="PRO" id="PR:Q9M401"/>
<dbReference type="Proteomes" id="UP000006548">
    <property type="component" value="Chromosome 3"/>
</dbReference>
<dbReference type="ExpressionAtlas" id="Q9M401">
    <property type="expression patterns" value="baseline and differential"/>
</dbReference>
<dbReference type="GO" id="GO:0009507">
    <property type="term" value="C:chloroplast"/>
    <property type="evidence" value="ECO:0000314"/>
    <property type="project" value="TAIR"/>
</dbReference>
<dbReference type="GO" id="GO:0009570">
    <property type="term" value="C:chloroplast stroma"/>
    <property type="evidence" value="ECO:0007005"/>
    <property type="project" value="TAIR"/>
</dbReference>
<dbReference type="GO" id="GO:0052656">
    <property type="term" value="F:L-isoleucine-2-oxoglutarate transaminase activity"/>
    <property type="evidence" value="ECO:0007669"/>
    <property type="project" value="RHEA"/>
</dbReference>
<dbReference type="GO" id="GO:0052654">
    <property type="term" value="F:L-leucine-2-oxoglutarate transaminase activity"/>
    <property type="evidence" value="ECO:0007669"/>
    <property type="project" value="RHEA"/>
</dbReference>
<dbReference type="GO" id="GO:0052655">
    <property type="term" value="F:L-valine-2-oxoglutarate transaminase activity"/>
    <property type="evidence" value="ECO:0007669"/>
    <property type="project" value="RHEA"/>
</dbReference>
<dbReference type="GO" id="GO:0010326">
    <property type="term" value="F:methionine-oxo-acid transaminase activity"/>
    <property type="evidence" value="ECO:0007669"/>
    <property type="project" value="UniProtKB-EC"/>
</dbReference>
<dbReference type="GO" id="GO:0009097">
    <property type="term" value="P:isoleucine biosynthetic process"/>
    <property type="evidence" value="ECO:0007669"/>
    <property type="project" value="UniProtKB-UniPathway"/>
</dbReference>
<dbReference type="GO" id="GO:0009098">
    <property type="term" value="P:L-leucine biosynthetic process"/>
    <property type="evidence" value="ECO:0007669"/>
    <property type="project" value="UniProtKB-UniPathway"/>
</dbReference>
<dbReference type="GO" id="GO:0009099">
    <property type="term" value="P:L-valine biosynthetic process"/>
    <property type="evidence" value="ECO:0007669"/>
    <property type="project" value="UniProtKB-UniPathway"/>
</dbReference>
<dbReference type="CDD" id="cd01557">
    <property type="entry name" value="BCAT_beta_family"/>
    <property type="match status" value="1"/>
</dbReference>
<dbReference type="FunFam" id="3.20.10.10:FF:000003">
    <property type="entry name" value="Branched-chain-amino-acid aminotransferase"/>
    <property type="match status" value="1"/>
</dbReference>
<dbReference type="FunFam" id="3.30.470.10:FF:000003">
    <property type="entry name" value="Branched-chain-amino-acid aminotransferase"/>
    <property type="match status" value="1"/>
</dbReference>
<dbReference type="Gene3D" id="3.30.470.10">
    <property type="match status" value="1"/>
</dbReference>
<dbReference type="Gene3D" id="3.20.10.10">
    <property type="entry name" value="D-amino Acid Aminotransferase, subunit A, domain 2"/>
    <property type="match status" value="1"/>
</dbReference>
<dbReference type="InterPro" id="IPR001544">
    <property type="entry name" value="Aminotrans_IV"/>
</dbReference>
<dbReference type="InterPro" id="IPR018300">
    <property type="entry name" value="Aminotrans_IV_CS"/>
</dbReference>
<dbReference type="InterPro" id="IPR036038">
    <property type="entry name" value="Aminotransferase-like"/>
</dbReference>
<dbReference type="InterPro" id="IPR005786">
    <property type="entry name" value="B_amino_transII"/>
</dbReference>
<dbReference type="InterPro" id="IPR043132">
    <property type="entry name" value="BCAT-like_C"/>
</dbReference>
<dbReference type="InterPro" id="IPR043131">
    <property type="entry name" value="BCAT-like_N"/>
</dbReference>
<dbReference type="InterPro" id="IPR033939">
    <property type="entry name" value="BCAT_family"/>
</dbReference>
<dbReference type="NCBIfam" id="TIGR01123">
    <property type="entry name" value="ilvE_II"/>
    <property type="match status" value="1"/>
</dbReference>
<dbReference type="NCBIfam" id="NF009897">
    <property type="entry name" value="PRK13357.1"/>
    <property type="match status" value="1"/>
</dbReference>
<dbReference type="PANTHER" id="PTHR42825">
    <property type="entry name" value="AMINO ACID AMINOTRANSFERASE"/>
    <property type="match status" value="1"/>
</dbReference>
<dbReference type="PANTHER" id="PTHR42825:SF2">
    <property type="entry name" value="BRANCHED-CHAIN-AMINO-ACID AMINOTRANSFERASE 3, CHLOROPLASTIC-RELATED"/>
    <property type="match status" value="1"/>
</dbReference>
<dbReference type="Pfam" id="PF01063">
    <property type="entry name" value="Aminotran_4"/>
    <property type="match status" value="1"/>
</dbReference>
<dbReference type="PIRSF" id="PIRSF006468">
    <property type="entry name" value="BCAT1"/>
    <property type="match status" value="1"/>
</dbReference>
<dbReference type="SUPFAM" id="SSF56752">
    <property type="entry name" value="D-aminoacid aminotransferase-like PLP-dependent enzymes"/>
    <property type="match status" value="1"/>
</dbReference>
<dbReference type="PROSITE" id="PS00770">
    <property type="entry name" value="AA_TRANSFER_CLASS_4"/>
    <property type="match status" value="1"/>
</dbReference>
<organism>
    <name type="scientific">Arabidopsis thaliana</name>
    <name type="common">Mouse-ear cress</name>
    <dbReference type="NCBI Taxonomy" id="3702"/>
    <lineage>
        <taxon>Eukaryota</taxon>
        <taxon>Viridiplantae</taxon>
        <taxon>Streptophyta</taxon>
        <taxon>Embryophyta</taxon>
        <taxon>Tracheophyta</taxon>
        <taxon>Spermatophyta</taxon>
        <taxon>Magnoliopsida</taxon>
        <taxon>eudicotyledons</taxon>
        <taxon>Gunneridae</taxon>
        <taxon>Pentapetalae</taxon>
        <taxon>rosids</taxon>
        <taxon>malvids</taxon>
        <taxon>Brassicales</taxon>
        <taxon>Brassicaceae</taxon>
        <taxon>Camelineae</taxon>
        <taxon>Arabidopsis</taxon>
    </lineage>
</organism>